<dbReference type="EC" id="2.3.2.23"/>
<dbReference type="EMBL" id="AAFI02000012">
    <property type="protein sequence ID" value="EAL70049.1"/>
    <property type="molecule type" value="Genomic_DNA"/>
</dbReference>
<dbReference type="RefSeq" id="XP_643940.1">
    <property type="nucleotide sequence ID" value="XM_638848.1"/>
</dbReference>
<dbReference type="SMR" id="Q86IZ3"/>
<dbReference type="FunCoup" id="Q86IZ3">
    <property type="interactions" value="257"/>
</dbReference>
<dbReference type="STRING" id="44689.Q86IZ3"/>
<dbReference type="PaxDb" id="44689-DDB0237666"/>
<dbReference type="EnsemblProtists" id="EAL70049">
    <property type="protein sequence ID" value="EAL70049"/>
    <property type="gene ID" value="DDB_G0274313"/>
</dbReference>
<dbReference type="GeneID" id="8619368"/>
<dbReference type="KEGG" id="ddi:DDB_G0274313"/>
<dbReference type="dictyBase" id="DDB_G0274313">
    <property type="gene designation" value="pex4"/>
</dbReference>
<dbReference type="VEuPathDB" id="AmoebaDB:DDB_G0274313"/>
<dbReference type="eggNOG" id="KOG0417">
    <property type="taxonomic scope" value="Eukaryota"/>
</dbReference>
<dbReference type="HOGENOM" id="CLU_030988_13_0_1"/>
<dbReference type="InParanoid" id="Q86IZ3"/>
<dbReference type="OMA" id="WRAVMKG"/>
<dbReference type="PhylomeDB" id="Q86IZ3"/>
<dbReference type="UniPathway" id="UPA00143"/>
<dbReference type="PRO" id="PR:Q86IZ3"/>
<dbReference type="Proteomes" id="UP000002195">
    <property type="component" value="Chromosome 2"/>
</dbReference>
<dbReference type="GO" id="GO:0005634">
    <property type="term" value="C:nucleus"/>
    <property type="evidence" value="ECO:0000318"/>
    <property type="project" value="GO_Central"/>
</dbReference>
<dbReference type="GO" id="GO:0005777">
    <property type="term" value="C:peroxisome"/>
    <property type="evidence" value="ECO:0000250"/>
    <property type="project" value="dictyBase"/>
</dbReference>
<dbReference type="GO" id="GO:0005524">
    <property type="term" value="F:ATP binding"/>
    <property type="evidence" value="ECO:0007669"/>
    <property type="project" value="UniProtKB-KW"/>
</dbReference>
<dbReference type="GO" id="GO:0061631">
    <property type="term" value="F:ubiquitin conjugating enzyme activity"/>
    <property type="evidence" value="ECO:0000318"/>
    <property type="project" value="GO_Central"/>
</dbReference>
<dbReference type="GO" id="GO:0007031">
    <property type="term" value="P:peroxisome organization"/>
    <property type="evidence" value="ECO:0000250"/>
    <property type="project" value="dictyBase"/>
</dbReference>
<dbReference type="GO" id="GO:0016558">
    <property type="term" value="P:protein import into peroxisome matrix"/>
    <property type="evidence" value="ECO:0000250"/>
    <property type="project" value="dictyBase"/>
</dbReference>
<dbReference type="GO" id="GO:0000209">
    <property type="term" value="P:protein polyubiquitination"/>
    <property type="evidence" value="ECO:0000318"/>
    <property type="project" value="GO_Central"/>
</dbReference>
<dbReference type="CDD" id="cd23812">
    <property type="entry name" value="UBCc_ScPEX4-like"/>
    <property type="match status" value="1"/>
</dbReference>
<dbReference type="FunFam" id="3.10.110.10:FF:000044">
    <property type="entry name" value="protein PEROXIN-4 isoform X1"/>
    <property type="match status" value="1"/>
</dbReference>
<dbReference type="Gene3D" id="3.10.110.10">
    <property type="entry name" value="Ubiquitin Conjugating Enzyme"/>
    <property type="match status" value="1"/>
</dbReference>
<dbReference type="InterPro" id="IPR050113">
    <property type="entry name" value="Ub_conjugating_enzyme"/>
</dbReference>
<dbReference type="InterPro" id="IPR000608">
    <property type="entry name" value="UBQ-conjugat_E2_core"/>
</dbReference>
<dbReference type="InterPro" id="IPR023313">
    <property type="entry name" value="UBQ-conjugating_AS"/>
</dbReference>
<dbReference type="InterPro" id="IPR016135">
    <property type="entry name" value="UBQ-conjugating_enzyme/RWD"/>
</dbReference>
<dbReference type="PANTHER" id="PTHR24067">
    <property type="entry name" value="UBIQUITIN-CONJUGATING ENZYME E2"/>
    <property type="match status" value="1"/>
</dbReference>
<dbReference type="Pfam" id="PF00179">
    <property type="entry name" value="UQ_con"/>
    <property type="match status" value="1"/>
</dbReference>
<dbReference type="SMART" id="SM00212">
    <property type="entry name" value="UBCc"/>
    <property type="match status" value="1"/>
</dbReference>
<dbReference type="SUPFAM" id="SSF54495">
    <property type="entry name" value="UBC-like"/>
    <property type="match status" value="1"/>
</dbReference>
<dbReference type="PROSITE" id="PS00183">
    <property type="entry name" value="UBC_1"/>
    <property type="match status" value="1"/>
</dbReference>
<dbReference type="PROSITE" id="PS50127">
    <property type="entry name" value="UBC_2"/>
    <property type="match status" value="1"/>
</dbReference>
<sequence>MAARLMKEYKVLQNEEFEDILLYPRDESDLYRWVAIIKGPPDTPYENGKFELDISVPTNYPLQPPTIKFVTKIFHPNIHFKTGEICLDLLKTSWSAIYTLQSVCRSIIALLSLPEADSPLNCDAGNLIRNGDVKGHDSLARMYTRLYGC</sequence>
<proteinExistence type="inferred from homology"/>
<protein>
    <recommendedName>
        <fullName>Ubiquitin-conjugating enzyme E2 pex4</fullName>
        <ecNumber>2.3.2.23</ecNumber>
    </recommendedName>
    <alternativeName>
        <fullName>E2 ubiquitin-conjugating enzyme pex4</fullName>
    </alternativeName>
    <alternativeName>
        <fullName>Peroxin-4</fullName>
    </alternativeName>
    <alternativeName>
        <fullName>Peroxisome biogenesis factor 4</fullName>
    </alternativeName>
    <alternativeName>
        <fullName>Ubiquitin carrier protein pex4</fullName>
    </alternativeName>
</protein>
<organism>
    <name type="scientific">Dictyostelium discoideum</name>
    <name type="common">Social amoeba</name>
    <dbReference type="NCBI Taxonomy" id="44689"/>
    <lineage>
        <taxon>Eukaryota</taxon>
        <taxon>Amoebozoa</taxon>
        <taxon>Evosea</taxon>
        <taxon>Eumycetozoa</taxon>
        <taxon>Dictyostelia</taxon>
        <taxon>Dictyosteliales</taxon>
        <taxon>Dictyosteliaceae</taxon>
        <taxon>Dictyostelium</taxon>
    </lineage>
</organism>
<accession>Q86IZ3</accession>
<accession>Q555X0</accession>
<evidence type="ECO:0000255" key="1">
    <source>
        <dbReference type="PROSITE-ProRule" id="PRU00388"/>
    </source>
</evidence>
<evidence type="ECO:0000255" key="2">
    <source>
        <dbReference type="PROSITE-ProRule" id="PRU10133"/>
    </source>
</evidence>
<gene>
    <name type="primary">pex4</name>
    <name type="ORF">DDB_G0274313</name>
</gene>
<feature type="chain" id="PRO_0000371405" description="Ubiquitin-conjugating enzyme E2 pex4">
    <location>
        <begin position="1"/>
        <end position="149"/>
    </location>
</feature>
<feature type="domain" description="UBC core" evidence="1">
    <location>
        <begin position="1"/>
        <end position="149"/>
    </location>
</feature>
<feature type="active site" description="Glycyl thioester intermediate" evidence="1 2">
    <location>
        <position position="86"/>
    </location>
</feature>
<reference key="1">
    <citation type="journal article" date="2002" name="Nature">
        <title>Sequence and analysis of chromosome 2 of Dictyostelium discoideum.</title>
        <authorList>
            <person name="Gloeckner G."/>
            <person name="Eichinger L."/>
            <person name="Szafranski K."/>
            <person name="Pachebat J.A."/>
            <person name="Bankier A.T."/>
            <person name="Dear P.H."/>
            <person name="Lehmann R."/>
            <person name="Baumgart C."/>
            <person name="Parra G."/>
            <person name="Abril J.F."/>
            <person name="Guigo R."/>
            <person name="Kumpf K."/>
            <person name="Tunggal B."/>
            <person name="Cox E.C."/>
            <person name="Quail M.A."/>
            <person name="Platzer M."/>
            <person name="Rosenthal A."/>
            <person name="Noegel A.A."/>
        </authorList>
    </citation>
    <scope>NUCLEOTIDE SEQUENCE [LARGE SCALE GENOMIC DNA]</scope>
    <source>
        <strain>AX4</strain>
    </source>
</reference>
<reference key="2">
    <citation type="journal article" date="2005" name="Nature">
        <title>The genome of the social amoeba Dictyostelium discoideum.</title>
        <authorList>
            <person name="Eichinger L."/>
            <person name="Pachebat J.A."/>
            <person name="Gloeckner G."/>
            <person name="Rajandream M.A."/>
            <person name="Sucgang R."/>
            <person name="Berriman M."/>
            <person name="Song J."/>
            <person name="Olsen R."/>
            <person name="Szafranski K."/>
            <person name="Xu Q."/>
            <person name="Tunggal B."/>
            <person name="Kummerfeld S."/>
            <person name="Madera M."/>
            <person name="Konfortov B.A."/>
            <person name="Rivero F."/>
            <person name="Bankier A.T."/>
            <person name="Lehmann R."/>
            <person name="Hamlin N."/>
            <person name="Davies R."/>
            <person name="Gaudet P."/>
            <person name="Fey P."/>
            <person name="Pilcher K."/>
            <person name="Chen G."/>
            <person name="Saunders D."/>
            <person name="Sodergren E.J."/>
            <person name="Davis P."/>
            <person name="Kerhornou A."/>
            <person name="Nie X."/>
            <person name="Hall N."/>
            <person name="Anjard C."/>
            <person name="Hemphill L."/>
            <person name="Bason N."/>
            <person name="Farbrother P."/>
            <person name="Desany B."/>
            <person name="Just E."/>
            <person name="Morio T."/>
            <person name="Rost R."/>
            <person name="Churcher C.M."/>
            <person name="Cooper J."/>
            <person name="Haydock S."/>
            <person name="van Driessche N."/>
            <person name="Cronin A."/>
            <person name="Goodhead I."/>
            <person name="Muzny D.M."/>
            <person name="Mourier T."/>
            <person name="Pain A."/>
            <person name="Lu M."/>
            <person name="Harper D."/>
            <person name="Lindsay R."/>
            <person name="Hauser H."/>
            <person name="James K.D."/>
            <person name="Quiles M."/>
            <person name="Madan Babu M."/>
            <person name="Saito T."/>
            <person name="Buchrieser C."/>
            <person name="Wardroper A."/>
            <person name="Felder M."/>
            <person name="Thangavelu M."/>
            <person name="Johnson D."/>
            <person name="Knights A."/>
            <person name="Loulseged H."/>
            <person name="Mungall K.L."/>
            <person name="Oliver K."/>
            <person name="Price C."/>
            <person name="Quail M.A."/>
            <person name="Urushihara H."/>
            <person name="Hernandez J."/>
            <person name="Rabbinowitsch E."/>
            <person name="Steffen D."/>
            <person name="Sanders M."/>
            <person name="Ma J."/>
            <person name="Kohara Y."/>
            <person name="Sharp S."/>
            <person name="Simmonds M.N."/>
            <person name="Spiegler S."/>
            <person name="Tivey A."/>
            <person name="Sugano S."/>
            <person name="White B."/>
            <person name="Walker D."/>
            <person name="Woodward J.R."/>
            <person name="Winckler T."/>
            <person name="Tanaka Y."/>
            <person name="Shaulsky G."/>
            <person name="Schleicher M."/>
            <person name="Weinstock G.M."/>
            <person name="Rosenthal A."/>
            <person name="Cox E.C."/>
            <person name="Chisholm R.L."/>
            <person name="Gibbs R.A."/>
            <person name="Loomis W.F."/>
            <person name="Platzer M."/>
            <person name="Kay R.R."/>
            <person name="Williams J.G."/>
            <person name="Dear P.H."/>
            <person name="Noegel A.A."/>
            <person name="Barrell B.G."/>
            <person name="Kuspa A."/>
        </authorList>
    </citation>
    <scope>NUCLEOTIDE SEQUENCE [LARGE SCALE GENOMIC DNA]</scope>
    <source>
        <strain>AX4</strain>
    </source>
</reference>
<comment type="function">
    <text evidence="1">Catalyzes the covalent attachment of ubiquitin to other proteins. Essential for peroxisome biogenesis.</text>
</comment>
<comment type="catalytic activity">
    <reaction evidence="1 2">
        <text>S-ubiquitinyl-[E1 ubiquitin-activating enzyme]-L-cysteine + [E2 ubiquitin-conjugating enzyme]-L-cysteine = [E1 ubiquitin-activating enzyme]-L-cysteine + S-ubiquitinyl-[E2 ubiquitin-conjugating enzyme]-L-cysteine.</text>
        <dbReference type="EC" id="2.3.2.23"/>
    </reaction>
</comment>
<comment type="pathway">
    <text evidence="1">Protein modification; protein ubiquitination.</text>
</comment>
<comment type="similarity">
    <text evidence="1">Belongs to the ubiquitin-conjugating enzyme family.</text>
</comment>
<keyword id="KW-0067">ATP-binding</keyword>
<keyword id="KW-0547">Nucleotide-binding</keyword>
<keyword id="KW-0962">Peroxisome biogenesis</keyword>
<keyword id="KW-1185">Reference proteome</keyword>
<keyword id="KW-0808">Transferase</keyword>
<keyword id="KW-0833">Ubl conjugation pathway</keyword>
<name>UBCX_DICDI</name>